<protein>
    <recommendedName>
        <fullName>Calcium/calmodulin-dependent protein kinase type 1D</fullName>
        <ecNumber>2.7.11.17</ecNumber>
    </recommendedName>
    <alternativeName>
        <fullName>CaM kinase I delta</fullName>
        <shortName>CaM kinase ID</shortName>
        <shortName>CaM-KI delta</shortName>
        <shortName>CaMKI delta</shortName>
        <shortName>CaMKID</shortName>
    </alternativeName>
    <alternativeName>
        <fullName>CaMKI-like protein kinase</fullName>
        <shortName>CKLiK</shortName>
    </alternativeName>
</protein>
<gene>
    <name type="primary">CAMK1D</name>
    <name type="synonym">CAMKID</name>
</gene>
<accession>Q8IU85</accession>
<accession>B0YIY0</accession>
<accession>Q9HD31</accession>
<comment type="function">
    <text evidence="5 7 8 9">Calcium/calmodulin-dependent protein kinase that operates in the calcium-triggered CaMKK-CaMK1 signaling cascade and, upon calcium influx, activates CREB-dependent gene transcription, regulates calcium-mediated granulocyte function and respiratory burst and promotes basal dendritic growth of hippocampal neurons. In neutrophil cells, required for cytokine-induced proliferative responses and activation of the respiratory burst. Activates the transcription factor CREB1 in hippocampal neuron nuclei. May play a role in apoptosis of erythroleukemia cells. In vitro, phosphorylates transcription factor CREM isoform Beta.</text>
</comment>
<comment type="catalytic activity">
    <reaction evidence="6">
        <text>L-seryl-[protein] + ATP = O-phospho-L-seryl-[protein] + ADP + H(+)</text>
        <dbReference type="Rhea" id="RHEA:17989"/>
        <dbReference type="Rhea" id="RHEA-COMP:9863"/>
        <dbReference type="Rhea" id="RHEA-COMP:11604"/>
        <dbReference type="ChEBI" id="CHEBI:15378"/>
        <dbReference type="ChEBI" id="CHEBI:29999"/>
        <dbReference type="ChEBI" id="CHEBI:30616"/>
        <dbReference type="ChEBI" id="CHEBI:83421"/>
        <dbReference type="ChEBI" id="CHEBI:456216"/>
        <dbReference type="EC" id="2.7.11.17"/>
    </reaction>
</comment>
<comment type="catalytic activity">
    <reaction evidence="6">
        <text>L-threonyl-[protein] + ATP = O-phospho-L-threonyl-[protein] + ADP + H(+)</text>
        <dbReference type="Rhea" id="RHEA:46608"/>
        <dbReference type="Rhea" id="RHEA-COMP:11060"/>
        <dbReference type="Rhea" id="RHEA-COMP:11605"/>
        <dbReference type="ChEBI" id="CHEBI:15378"/>
        <dbReference type="ChEBI" id="CHEBI:30013"/>
        <dbReference type="ChEBI" id="CHEBI:30616"/>
        <dbReference type="ChEBI" id="CHEBI:61977"/>
        <dbReference type="ChEBI" id="CHEBI:456216"/>
        <dbReference type="EC" id="2.7.11.17"/>
    </reaction>
</comment>
<comment type="activity regulation">
    <text evidence="5 6">Activated by Ca(2+)/calmodulin. Binding of calmodulin results in conformational change that relieves intrasteric autoinhibition and allows phosphorylation of Thr-180 within the activation loop by CaMKK1 or CaMKK2. Phosphorylation of Thr-180 results in several fold increase in total activity. Unlike CaMK4, may be unable to exhibit autonomous activity after Ca(2+)/calmodulin activation.</text>
</comment>
<comment type="interaction">
    <interactant intactId="EBI-3911453">
        <id>Q8IU85</id>
    </interactant>
    <interactant intactId="EBI-6380130">
        <id>Q14012</id>
        <label>CAMK1</label>
    </interactant>
    <organismsDiffer>false</organismsDiffer>
    <experiments>3</experiments>
</comment>
<comment type="subcellular location">
    <subcellularLocation>
        <location evidence="12">Cytoplasm</location>
    </subcellularLocation>
    <subcellularLocation>
        <location evidence="12">Nucleus</location>
    </subcellularLocation>
    <text>Predominantly cytoplasmic. Nuclear localization increases upon activation by KCl treatment in hippocampal neurons.</text>
</comment>
<comment type="alternative products">
    <event type="alternative splicing"/>
    <isoform>
        <id>Q8IU85-1</id>
        <name>1</name>
        <sequence type="displayed"/>
    </isoform>
    <isoform>
        <id>Q8IU85-2</id>
        <name>2</name>
        <sequence type="described" ref="VSP_012135"/>
    </isoform>
</comment>
<comment type="tissue specificity">
    <text evidence="5 6 7">Widely expressed. Highly and mostly expressed in polymorphonuclear leukocytes (neutrophilic and eosinophilic granulocytes) while little or no expression is observed in monocytes and lymphocytes.</text>
</comment>
<comment type="developmental stage">
    <text evidence="8 9">Expressed during hippocampal formation with high expression in the pyramidal cell layers.</text>
</comment>
<comment type="induction">
    <text evidence="8">Expression increases upon treatment of EC cells with DMSO and retinoic acid. Induced by KCL in PC12 cells.</text>
</comment>
<comment type="domain">
    <text evidence="1">The autoinhibitory domain overlaps with the calmodulin binding region and interacts in the inactive folded state with the catalytic domain as a pseudosubstrate.</text>
</comment>
<comment type="similarity">
    <text evidence="12">Belongs to the protein kinase superfamily. CAMK Ser/Thr protein kinase family. CaMK subfamily.</text>
</comment>
<evidence type="ECO:0000250" key="1"/>
<evidence type="ECO:0000255" key="2">
    <source>
        <dbReference type="PROSITE-ProRule" id="PRU00159"/>
    </source>
</evidence>
<evidence type="ECO:0000255" key="3">
    <source>
        <dbReference type="PROSITE-ProRule" id="PRU10027"/>
    </source>
</evidence>
<evidence type="ECO:0000256" key="4">
    <source>
        <dbReference type="SAM" id="MobiDB-lite"/>
    </source>
</evidence>
<evidence type="ECO:0000269" key="5">
    <source>
    </source>
</evidence>
<evidence type="ECO:0000269" key="6">
    <source>
    </source>
</evidence>
<evidence type="ECO:0000269" key="7">
    <source>
    </source>
</evidence>
<evidence type="ECO:0000269" key="8">
    <source>
    </source>
</evidence>
<evidence type="ECO:0000269" key="9">
    <source>
    </source>
</evidence>
<evidence type="ECO:0000269" key="10">
    <source>
    </source>
</evidence>
<evidence type="ECO:0000303" key="11">
    <source>
    </source>
</evidence>
<evidence type="ECO:0000305" key="12"/>
<evidence type="ECO:0007744" key="13">
    <source>
    </source>
</evidence>
<evidence type="ECO:0007744" key="14">
    <source>
    </source>
</evidence>
<evidence type="ECO:0007829" key="15">
    <source>
        <dbReference type="PDB" id="2JC6"/>
    </source>
</evidence>
<evidence type="ECO:0007829" key="16">
    <source>
        <dbReference type="PDB" id="6T6F"/>
    </source>
</evidence>
<evidence type="ECO:0007829" key="17">
    <source>
        <dbReference type="PDB" id="8BFM"/>
    </source>
</evidence>
<evidence type="ECO:0007829" key="18">
    <source>
        <dbReference type="PDB" id="8BFS"/>
    </source>
</evidence>
<organism>
    <name type="scientific">Homo sapiens</name>
    <name type="common">Human</name>
    <dbReference type="NCBI Taxonomy" id="9606"/>
    <lineage>
        <taxon>Eukaryota</taxon>
        <taxon>Metazoa</taxon>
        <taxon>Chordata</taxon>
        <taxon>Craniata</taxon>
        <taxon>Vertebrata</taxon>
        <taxon>Euteleostomi</taxon>
        <taxon>Mammalia</taxon>
        <taxon>Eutheria</taxon>
        <taxon>Euarchontoglires</taxon>
        <taxon>Primates</taxon>
        <taxon>Haplorrhini</taxon>
        <taxon>Catarrhini</taxon>
        <taxon>Hominidae</taxon>
        <taxon>Homo</taxon>
    </lineage>
</organism>
<keyword id="KW-0002">3D-structure</keyword>
<keyword id="KW-0021">Allosteric enzyme</keyword>
<keyword id="KW-0025">Alternative splicing</keyword>
<keyword id="KW-0067">ATP-binding</keyword>
<keyword id="KW-0106">Calcium</keyword>
<keyword id="KW-0112">Calmodulin-binding</keyword>
<keyword id="KW-0963">Cytoplasm</keyword>
<keyword id="KW-0395">Inflammatory response</keyword>
<keyword id="KW-1017">Isopeptide bond</keyword>
<keyword id="KW-0418">Kinase</keyword>
<keyword id="KW-0524">Neurogenesis</keyword>
<keyword id="KW-0547">Nucleotide-binding</keyword>
<keyword id="KW-0539">Nucleus</keyword>
<keyword id="KW-0597">Phosphoprotein</keyword>
<keyword id="KW-1267">Proteomics identification</keyword>
<keyword id="KW-1185">Reference proteome</keyword>
<keyword id="KW-0723">Serine/threonine-protein kinase</keyword>
<keyword id="KW-0808">Transferase</keyword>
<keyword id="KW-0832">Ubl conjugation</keyword>
<feature type="chain" id="PRO_0000086082" description="Calcium/calmodulin-dependent protein kinase type 1D">
    <location>
        <begin position="1"/>
        <end position="385"/>
    </location>
</feature>
<feature type="domain" description="Protein kinase" evidence="2">
    <location>
        <begin position="23"/>
        <end position="279"/>
    </location>
</feature>
<feature type="region of interest" description="Autoinhibitory domain" evidence="1">
    <location>
        <begin position="279"/>
        <end position="319"/>
    </location>
</feature>
<feature type="region of interest" description="Calmodulin-binding" evidence="1">
    <location>
        <begin position="299"/>
        <end position="320"/>
    </location>
</feature>
<feature type="region of interest" description="Disordered" evidence="4">
    <location>
        <begin position="360"/>
        <end position="385"/>
    </location>
</feature>
<feature type="short sequence motif" description="Nuclear export signal" evidence="1">
    <location>
        <begin position="318"/>
        <end position="324"/>
    </location>
</feature>
<feature type="compositionally biased region" description="Polar residues" evidence="4">
    <location>
        <begin position="375"/>
        <end position="385"/>
    </location>
</feature>
<feature type="active site" description="Proton acceptor" evidence="2 3">
    <location>
        <position position="144"/>
    </location>
</feature>
<feature type="binding site" evidence="2">
    <location>
        <begin position="29"/>
        <end position="37"/>
    </location>
    <ligand>
        <name>ATP</name>
        <dbReference type="ChEBI" id="CHEBI:30616"/>
    </ligand>
</feature>
<feature type="binding site" evidence="2">
    <location>
        <position position="52"/>
    </location>
    <ligand>
        <name>ATP</name>
        <dbReference type="ChEBI" id="CHEBI:30616"/>
    </ligand>
</feature>
<feature type="modified residue" description="Phosphoserine" evidence="13">
    <location>
        <position position="122"/>
    </location>
</feature>
<feature type="modified residue" description="Phosphothreonine; by CaMKK1 and CaMKK2" evidence="6 13">
    <location>
        <position position="180"/>
    </location>
</feature>
<feature type="cross-link" description="Glycyl lysine isopeptide (Lys-Gly) (interchain with G-Cter in SUMO2)" evidence="14">
    <location>
        <position position="113"/>
    </location>
</feature>
<feature type="splice variant" id="VSP_012135" description="In isoform 2." evidence="11">
    <original>LAPSTLCSFISSSSGVSGVGAERRPRPTTVTAVHSGSK</original>
    <variation>AYVAKPESLS</variation>
    <location>
        <begin position="348"/>
        <end position="385"/>
    </location>
</feature>
<feature type="sequence variant" id="VAR_040599" description="In dbSNP:rs34194224." evidence="10">
    <original>I</original>
    <variation>M</variation>
    <location>
        <position position="66"/>
    </location>
</feature>
<feature type="mutagenesis site" description="Catalytically inactive form." evidence="8">
    <original>K</original>
    <variation>A</variation>
    <location>
        <position position="52"/>
    </location>
</feature>
<feature type="mutagenesis site" description="Loss of ionomycin-induced activation." evidence="6 8">
    <original>T</original>
    <variation>A</variation>
    <location>
        <position position="180"/>
    </location>
</feature>
<feature type="strand" evidence="15">
    <location>
        <begin position="13"/>
        <end position="15"/>
    </location>
</feature>
<feature type="helix" evidence="17">
    <location>
        <begin position="19"/>
        <end position="21"/>
    </location>
</feature>
<feature type="strand" evidence="17">
    <location>
        <begin position="23"/>
        <end position="31"/>
    </location>
</feature>
<feature type="strand" evidence="17">
    <location>
        <begin position="36"/>
        <end position="42"/>
    </location>
</feature>
<feature type="turn" evidence="17">
    <location>
        <begin position="43"/>
        <end position="45"/>
    </location>
</feature>
<feature type="strand" evidence="17">
    <location>
        <begin position="48"/>
        <end position="55"/>
    </location>
</feature>
<feature type="helix" evidence="17">
    <location>
        <begin position="56"/>
        <end position="59"/>
    </location>
</feature>
<feature type="turn" evidence="18">
    <location>
        <begin position="60"/>
        <end position="62"/>
    </location>
</feature>
<feature type="helix" evidence="17">
    <location>
        <begin position="63"/>
        <end position="73"/>
    </location>
</feature>
<feature type="strand" evidence="17">
    <location>
        <begin position="84"/>
        <end position="89"/>
    </location>
</feature>
<feature type="strand" evidence="17">
    <location>
        <begin position="91"/>
        <end position="99"/>
    </location>
</feature>
<feature type="strand" evidence="16">
    <location>
        <begin position="103"/>
        <end position="105"/>
    </location>
</feature>
<feature type="helix" evidence="17">
    <location>
        <begin position="106"/>
        <end position="112"/>
    </location>
</feature>
<feature type="helix" evidence="17">
    <location>
        <begin position="118"/>
        <end position="137"/>
    </location>
</feature>
<feature type="helix" evidence="17">
    <location>
        <begin position="147"/>
        <end position="149"/>
    </location>
</feature>
<feature type="strand" evidence="17">
    <location>
        <begin position="150"/>
        <end position="153"/>
    </location>
</feature>
<feature type="strand" evidence="17">
    <location>
        <begin position="161"/>
        <end position="163"/>
    </location>
</feature>
<feature type="turn" evidence="17">
    <location>
        <begin position="190"/>
        <end position="192"/>
    </location>
</feature>
<feature type="helix" evidence="17">
    <location>
        <begin position="201"/>
        <end position="216"/>
    </location>
</feature>
<feature type="helix" evidence="17">
    <location>
        <begin position="227"/>
        <end position="234"/>
    </location>
</feature>
<feature type="turn" evidence="17">
    <location>
        <begin position="242"/>
        <end position="247"/>
    </location>
</feature>
<feature type="helix" evidence="17">
    <location>
        <begin position="250"/>
        <end position="259"/>
    </location>
</feature>
<feature type="turn" evidence="17">
    <location>
        <begin position="264"/>
        <end position="266"/>
    </location>
</feature>
<feature type="helix" evidence="17">
    <location>
        <begin position="270"/>
        <end position="275"/>
    </location>
</feature>
<feature type="helix" evidence="17">
    <location>
        <begin position="277"/>
        <end position="280"/>
    </location>
</feature>
<feature type="helix" evidence="17">
    <location>
        <begin position="290"/>
        <end position="300"/>
    </location>
</feature>
<feature type="helix" evidence="15">
    <location>
        <begin position="305"/>
        <end position="311"/>
    </location>
</feature>
<feature type="turn" evidence="16">
    <location>
        <begin position="323"/>
        <end position="327"/>
    </location>
</feature>
<name>KCC1D_HUMAN</name>
<proteinExistence type="evidence at protein level"/>
<reference key="1">
    <citation type="journal article" date="2000" name="Blood">
        <title>Identification and characterization of CKLiK, a novel granulocyte Ca++/calmodulin-dependent protein kinase.</title>
        <authorList>
            <person name="Verploegen S."/>
            <person name="Lammers J.-W.L."/>
            <person name="Koenderman L."/>
            <person name="Coffer P.J."/>
        </authorList>
    </citation>
    <scope>NUCLEOTIDE SEQUENCE [MRNA] (ISOFORM 2)</scope>
    <scope>FUNCTION IN PHOSPHORYLATION OF CREM AND ACTIVATION OF CREB1</scope>
    <scope>ACTIVITY REGULATION</scope>
    <scope>TISSUE SPECIFICITY</scope>
    <scope>SUBCELLULAR LOCATION</scope>
</reference>
<reference key="2">
    <citation type="journal article" date="2003" name="FEBS Lett.">
        <title>Identification and characterization of novel components of a Ca2+/calmodulin-dependent protein kinase cascade in HeLa cells.</title>
        <authorList>
            <person name="Ishikawa Y."/>
            <person name="Tokumitsu H."/>
            <person name="Inuzuka H."/>
            <person name="Murata-Hori M."/>
            <person name="Hosoya H."/>
            <person name="Kobayashi R."/>
        </authorList>
    </citation>
    <scope>NUCLEOTIDE SEQUENCE [MRNA] (ISOFORM 1)</scope>
    <scope>CATALYTIC ACTIVITY</scope>
    <scope>ACTIVITY REGULATION</scope>
    <scope>PHOSPHORYLATION AT THR-180</scope>
    <scope>PHOSPHORYLATION BY CAMKK1 AND CAMKK2</scope>
    <scope>MUTAGENESIS OF THR-180</scope>
    <scope>TISSUE SPECIFICITY</scope>
</reference>
<reference key="3">
    <citation type="submission" date="2007-02" db="EMBL/GenBank/DDBJ databases">
        <authorList>
            <consortium name="NHLBI resequencing and genotyping service (RS&amp;G)"/>
        </authorList>
    </citation>
    <scope>NUCLEOTIDE SEQUENCE [GENOMIC DNA]</scope>
</reference>
<reference key="4">
    <citation type="journal article" date="2004" name="Nature">
        <title>The DNA sequence and comparative analysis of human chromosome 10.</title>
        <authorList>
            <person name="Deloukas P."/>
            <person name="Earthrowl M.E."/>
            <person name="Grafham D.V."/>
            <person name="Rubenfield M."/>
            <person name="French L."/>
            <person name="Steward C.A."/>
            <person name="Sims S.K."/>
            <person name="Jones M.C."/>
            <person name="Searle S."/>
            <person name="Scott C."/>
            <person name="Howe K."/>
            <person name="Hunt S.E."/>
            <person name="Andrews T.D."/>
            <person name="Gilbert J.G.R."/>
            <person name="Swarbreck D."/>
            <person name="Ashurst J.L."/>
            <person name="Taylor A."/>
            <person name="Battles J."/>
            <person name="Bird C.P."/>
            <person name="Ainscough R."/>
            <person name="Almeida J.P."/>
            <person name="Ashwell R.I.S."/>
            <person name="Ambrose K.D."/>
            <person name="Babbage A.K."/>
            <person name="Bagguley C.L."/>
            <person name="Bailey J."/>
            <person name="Banerjee R."/>
            <person name="Bates K."/>
            <person name="Beasley H."/>
            <person name="Bray-Allen S."/>
            <person name="Brown A.J."/>
            <person name="Brown J.Y."/>
            <person name="Burford D.C."/>
            <person name="Burrill W."/>
            <person name="Burton J."/>
            <person name="Cahill P."/>
            <person name="Camire D."/>
            <person name="Carter N.P."/>
            <person name="Chapman J.C."/>
            <person name="Clark S.Y."/>
            <person name="Clarke G."/>
            <person name="Clee C.M."/>
            <person name="Clegg S."/>
            <person name="Corby N."/>
            <person name="Coulson A."/>
            <person name="Dhami P."/>
            <person name="Dutta I."/>
            <person name="Dunn M."/>
            <person name="Faulkner L."/>
            <person name="Frankish A."/>
            <person name="Frankland J.A."/>
            <person name="Garner P."/>
            <person name="Garnett J."/>
            <person name="Gribble S."/>
            <person name="Griffiths C."/>
            <person name="Grocock R."/>
            <person name="Gustafson E."/>
            <person name="Hammond S."/>
            <person name="Harley J.L."/>
            <person name="Hart E."/>
            <person name="Heath P.D."/>
            <person name="Ho T.P."/>
            <person name="Hopkins B."/>
            <person name="Horne J."/>
            <person name="Howden P.J."/>
            <person name="Huckle E."/>
            <person name="Hynds C."/>
            <person name="Johnson C."/>
            <person name="Johnson D."/>
            <person name="Kana A."/>
            <person name="Kay M."/>
            <person name="Kimberley A.M."/>
            <person name="Kershaw J.K."/>
            <person name="Kokkinaki M."/>
            <person name="Laird G.K."/>
            <person name="Lawlor S."/>
            <person name="Lee H.M."/>
            <person name="Leongamornlert D.A."/>
            <person name="Laird G."/>
            <person name="Lloyd C."/>
            <person name="Lloyd D.M."/>
            <person name="Loveland J."/>
            <person name="Lovell J."/>
            <person name="McLaren S."/>
            <person name="McLay K.E."/>
            <person name="McMurray A."/>
            <person name="Mashreghi-Mohammadi M."/>
            <person name="Matthews L."/>
            <person name="Milne S."/>
            <person name="Nickerson T."/>
            <person name="Nguyen M."/>
            <person name="Overton-Larty E."/>
            <person name="Palmer S.A."/>
            <person name="Pearce A.V."/>
            <person name="Peck A.I."/>
            <person name="Pelan S."/>
            <person name="Phillimore B."/>
            <person name="Porter K."/>
            <person name="Rice C.M."/>
            <person name="Rogosin A."/>
            <person name="Ross M.T."/>
            <person name="Sarafidou T."/>
            <person name="Sehra H.K."/>
            <person name="Shownkeen R."/>
            <person name="Skuce C.D."/>
            <person name="Smith M."/>
            <person name="Standring L."/>
            <person name="Sycamore N."/>
            <person name="Tester J."/>
            <person name="Thorpe A."/>
            <person name="Torcasso W."/>
            <person name="Tracey A."/>
            <person name="Tromans A."/>
            <person name="Tsolas J."/>
            <person name="Wall M."/>
            <person name="Walsh J."/>
            <person name="Wang H."/>
            <person name="Weinstock K."/>
            <person name="West A.P."/>
            <person name="Willey D.L."/>
            <person name="Whitehead S.L."/>
            <person name="Wilming L."/>
            <person name="Wray P.W."/>
            <person name="Young L."/>
            <person name="Chen Y."/>
            <person name="Lovering R.C."/>
            <person name="Moschonas N.K."/>
            <person name="Siebert R."/>
            <person name="Fechtel K."/>
            <person name="Bentley D."/>
            <person name="Durbin R.M."/>
            <person name="Hubbard T."/>
            <person name="Doucette-Stamm L."/>
            <person name="Beck S."/>
            <person name="Smith D.R."/>
            <person name="Rogers J."/>
        </authorList>
    </citation>
    <scope>NUCLEOTIDE SEQUENCE [LARGE SCALE GENOMIC DNA]</scope>
</reference>
<reference key="5">
    <citation type="submission" date="2005-09" db="EMBL/GenBank/DDBJ databases">
        <authorList>
            <person name="Mural R.J."/>
            <person name="Istrail S."/>
            <person name="Sutton G.G."/>
            <person name="Florea L."/>
            <person name="Halpern A.L."/>
            <person name="Mobarry C.M."/>
            <person name="Lippert R."/>
            <person name="Walenz B."/>
            <person name="Shatkay H."/>
            <person name="Dew I."/>
            <person name="Miller J.R."/>
            <person name="Flanigan M.J."/>
            <person name="Edwards N.J."/>
            <person name="Bolanos R."/>
            <person name="Fasulo D."/>
            <person name="Halldorsson B.V."/>
            <person name="Hannenhalli S."/>
            <person name="Turner R."/>
            <person name="Yooseph S."/>
            <person name="Lu F."/>
            <person name="Nusskern D.R."/>
            <person name="Shue B.C."/>
            <person name="Zheng X.H."/>
            <person name="Zhong F."/>
            <person name="Delcher A.L."/>
            <person name="Huson D.H."/>
            <person name="Kravitz S.A."/>
            <person name="Mouchard L."/>
            <person name="Reinert K."/>
            <person name="Remington K.A."/>
            <person name="Clark A.G."/>
            <person name="Waterman M.S."/>
            <person name="Eichler E.E."/>
            <person name="Adams M.D."/>
            <person name="Hunkapiller M.W."/>
            <person name="Myers E.W."/>
            <person name="Venter J.C."/>
        </authorList>
    </citation>
    <scope>NUCLEOTIDE SEQUENCE [LARGE SCALE GENOMIC DNA]</scope>
</reference>
<reference key="6">
    <citation type="journal article" date="2004" name="Genome Res.">
        <title>The status, quality, and expansion of the NIH full-length cDNA project: the Mammalian Gene Collection (MGC).</title>
        <authorList>
            <consortium name="The MGC Project Team"/>
        </authorList>
    </citation>
    <scope>NUCLEOTIDE SEQUENCE [LARGE SCALE MRNA] (ISOFORM 1)</scope>
    <source>
        <tissue>Pancreas</tissue>
    </source>
</reference>
<reference key="7">
    <citation type="journal article" date="2005" name="Blood">
        <title>Characterization of the role of CaMKI-like kinase (CKLiK) in human granulocyte function.</title>
        <authorList>
            <person name="Verploegen S."/>
            <person name="Ulfman L."/>
            <person name="van Deutekom H.W."/>
            <person name="van Aalst C."/>
            <person name="Honing H."/>
            <person name="Lammers J.W."/>
            <person name="Koenderman L."/>
            <person name="Coffer P.J."/>
        </authorList>
    </citation>
    <scope>FUNCTION</scope>
    <scope>TISSUE SPECIFICITY</scope>
</reference>
<reference key="8">
    <citation type="journal article" date="2005" name="Eur. J. Neurosci.">
        <title>Prominent expression and activity-dependent nuclear translocation of Ca2+/calmodulin-dependent protein kinase Idelta in hippocampal neurons.</title>
        <authorList>
            <person name="Sakagami H."/>
            <person name="Kamata A."/>
            <person name="Nishimura H."/>
            <person name="Kasahara J."/>
            <person name="Owada Y."/>
            <person name="Takeuchi Y."/>
            <person name="Watanabe M."/>
            <person name="Fukunaga K."/>
            <person name="Kondo H."/>
        </authorList>
    </citation>
    <scope>FUNCTION IN CREB1 ACTIVATION</scope>
    <scope>SUBCELLULAR LOCATION</scope>
    <scope>DEVELOPMENTAL STAGE</scope>
    <scope>INDUCTION BY KCL</scope>
    <scope>MUTAGENESIS OF LYS-52 AND THR-180</scope>
</reference>
<reference key="9">
    <citation type="journal article" date="2007" name="Neurosci. Res.">
        <title>Spatiotemporal expression of four isoforms of Ca2+/calmodulin-dependent protein kinase I in brain and its possible roles in hippocampal dendritic growth.</title>
        <authorList>
            <person name="Kamata A."/>
            <person name="Sakagami H."/>
            <person name="Tokumitsu H."/>
            <person name="Owada Y."/>
            <person name="Fukunaga K."/>
            <person name="Kondo H."/>
        </authorList>
    </citation>
    <scope>FUNCTION IN DENDRITIC GROWTH</scope>
    <scope>DEVELOPMENTAL STAGE</scope>
</reference>
<reference key="10">
    <citation type="journal article" date="2008" name="Neuron">
        <title>Calmodulin-kinases: modulators of neuronal development and plasticity.</title>
        <authorList>
            <person name="Wayman G.A."/>
            <person name="Lee Y.S."/>
            <person name="Tokumitsu H."/>
            <person name="Silva A.J."/>
            <person name="Silva A."/>
            <person name="Soderling T.R."/>
        </authorList>
    </citation>
    <scope>REVIEW ON FUNCTION IN NEURONAL PLASTICITY</scope>
</reference>
<reference key="11">
    <citation type="journal article" date="2008" name="Proc. Natl. Acad. Sci. U.S.A.">
        <title>A quantitative atlas of mitotic phosphorylation.</title>
        <authorList>
            <person name="Dephoure N."/>
            <person name="Zhou C."/>
            <person name="Villen J."/>
            <person name="Beausoleil S.A."/>
            <person name="Bakalarski C.E."/>
            <person name="Elledge S.J."/>
            <person name="Gygi S.P."/>
        </authorList>
    </citation>
    <scope>PHOSPHORYLATION [LARGE SCALE ANALYSIS] AT SER-122 AND THR-180</scope>
    <scope>IDENTIFICATION BY MASS SPECTROMETRY [LARGE SCALE ANALYSIS]</scope>
    <source>
        <tissue>Cervix carcinoma</tissue>
    </source>
</reference>
<reference key="12">
    <citation type="journal article" date="2014" name="J. Proteomics">
        <title>An enzyme assisted RP-RPLC approach for in-depth analysis of human liver phosphoproteome.</title>
        <authorList>
            <person name="Bian Y."/>
            <person name="Song C."/>
            <person name="Cheng K."/>
            <person name="Dong M."/>
            <person name="Wang F."/>
            <person name="Huang J."/>
            <person name="Sun D."/>
            <person name="Wang L."/>
            <person name="Ye M."/>
            <person name="Zou H."/>
        </authorList>
    </citation>
    <scope>IDENTIFICATION BY MASS SPECTROMETRY [LARGE SCALE ANALYSIS]</scope>
    <source>
        <tissue>Liver</tissue>
    </source>
</reference>
<reference key="13">
    <citation type="journal article" date="2014" name="Nat. Struct. Mol. Biol.">
        <title>Uncovering global SUMOylation signaling networks in a site-specific manner.</title>
        <authorList>
            <person name="Hendriks I.A."/>
            <person name="D'Souza R.C."/>
            <person name="Yang B."/>
            <person name="Verlaan-de Vries M."/>
            <person name="Mann M."/>
            <person name="Vertegaal A.C."/>
        </authorList>
    </citation>
    <scope>SUMOYLATION [LARGE SCALE ANALYSIS] AT LYS-113</scope>
    <scope>IDENTIFICATION BY MASS SPECTROMETRY [LARGE SCALE ANALYSIS]</scope>
</reference>
<reference key="14">
    <citation type="submission" date="2006-12" db="PDB data bank">
        <title>Crystal structure of human calmodulin-dependent protein kinase 1D.</title>
        <authorList>
            <person name="Debreczeni J.E."/>
            <person name="Rellos P."/>
            <person name="Fedorov O."/>
            <person name="Niesen F.H."/>
            <person name="Bhatia C."/>
            <person name="Shrestha L."/>
            <person name="Salah E."/>
            <person name="Smee C."/>
            <person name="Colebrook S."/>
            <person name="Berridge G."/>
            <person name="Gileadi O."/>
            <person name="Bunkoczi G."/>
            <person name="Ugochukwu E."/>
            <person name="Pike A.C.W."/>
            <person name="Von Delft F."/>
            <person name="Knapp S."/>
            <person name="Sundstrom M."/>
            <person name="Weigelt J."/>
            <person name="Arrowsmith C.H."/>
            <person name="Edwards A."/>
        </authorList>
    </citation>
    <scope>X-RAY CRYSTALLOGRAPHY (2.30 ANGSTROMS) OF 1-333 IN COMPLEX WITH INHIBITOR</scope>
</reference>
<reference key="15">
    <citation type="journal article" date="2007" name="Nature">
        <title>Patterns of somatic mutation in human cancer genomes.</title>
        <authorList>
            <person name="Greenman C."/>
            <person name="Stephens P."/>
            <person name="Smith R."/>
            <person name="Dalgliesh G.L."/>
            <person name="Hunter C."/>
            <person name="Bignell G."/>
            <person name="Davies H."/>
            <person name="Teague J."/>
            <person name="Butler A."/>
            <person name="Stevens C."/>
            <person name="Edkins S."/>
            <person name="O'Meara S."/>
            <person name="Vastrik I."/>
            <person name="Schmidt E.E."/>
            <person name="Avis T."/>
            <person name="Barthorpe S."/>
            <person name="Bhamra G."/>
            <person name="Buck G."/>
            <person name="Choudhury B."/>
            <person name="Clements J."/>
            <person name="Cole J."/>
            <person name="Dicks E."/>
            <person name="Forbes S."/>
            <person name="Gray K."/>
            <person name="Halliday K."/>
            <person name="Harrison R."/>
            <person name="Hills K."/>
            <person name="Hinton J."/>
            <person name="Jenkinson A."/>
            <person name="Jones D."/>
            <person name="Menzies A."/>
            <person name="Mironenko T."/>
            <person name="Perry J."/>
            <person name="Raine K."/>
            <person name="Richardson D."/>
            <person name="Shepherd R."/>
            <person name="Small A."/>
            <person name="Tofts C."/>
            <person name="Varian J."/>
            <person name="Webb T."/>
            <person name="West S."/>
            <person name="Widaa S."/>
            <person name="Yates A."/>
            <person name="Cahill D.P."/>
            <person name="Louis D.N."/>
            <person name="Goldstraw P."/>
            <person name="Nicholson A.G."/>
            <person name="Brasseur F."/>
            <person name="Looijenga L."/>
            <person name="Weber B.L."/>
            <person name="Chiew Y.-E."/>
            <person name="DeFazio A."/>
            <person name="Greaves M.F."/>
            <person name="Green A.R."/>
            <person name="Campbell P."/>
            <person name="Birney E."/>
            <person name="Easton D.F."/>
            <person name="Chenevix-Trench G."/>
            <person name="Tan M.-H."/>
            <person name="Khoo S.K."/>
            <person name="Teh B.T."/>
            <person name="Yuen S.T."/>
            <person name="Leung S.Y."/>
            <person name="Wooster R."/>
            <person name="Futreal P.A."/>
            <person name="Stratton M.R."/>
        </authorList>
    </citation>
    <scope>VARIANT [LARGE SCALE ANALYSIS] MET-66</scope>
</reference>
<sequence>MARENGESSSSWKKQAEDIKKIFEFKETLGTGAFSEVVLAEEKATGKLFAVKCIPKKALKGKESSIENEIAVLRKIKHENIVALEDIYESPNHLYLVMQLVSGGELFDRIVEKGFYTEKDASTLIRQVLDAVYYLHRMGIVHRDLKPENLLYYSQDEESKIMISDFGLSKMEGKGDVMSTACGTPGYVAPEVLAQKPYSKAVDCWSIGVIAYILLCGYPPFYDENDSKLFEQILKAEYEFDSPYWDDISDSAKDFIRNLMEKDPNKRYTCEQAARHPWIAGDTALNKNIHESVSAQIRKNFAKSKWRQAFNATAVVRHMRKLHLGSSLDSSNASVSSSLSLASQKDCLAPSTLCSFISSSSGVSGVGAERRPRPTTVTAVHSGSK</sequence>
<dbReference type="EC" id="2.7.11.17"/>
<dbReference type="EMBL" id="AF286366">
    <property type="protein sequence ID" value="AAG00534.1"/>
    <property type="molecule type" value="mRNA"/>
</dbReference>
<dbReference type="EMBL" id="AB081726">
    <property type="protein sequence ID" value="BAC19846.1"/>
    <property type="molecule type" value="mRNA"/>
</dbReference>
<dbReference type="EMBL" id="EF444962">
    <property type="protein sequence ID" value="ACA05959.1"/>
    <property type="molecule type" value="Genomic_DNA"/>
</dbReference>
<dbReference type="EMBL" id="AL391314">
    <property type="status" value="NOT_ANNOTATED_CDS"/>
    <property type="molecule type" value="Genomic_DNA"/>
</dbReference>
<dbReference type="EMBL" id="AL512284">
    <property type="status" value="NOT_ANNOTATED_CDS"/>
    <property type="molecule type" value="Genomic_DNA"/>
</dbReference>
<dbReference type="EMBL" id="AL512783">
    <property type="status" value="NOT_ANNOTATED_CDS"/>
    <property type="molecule type" value="Genomic_DNA"/>
</dbReference>
<dbReference type="EMBL" id="AL731559">
    <property type="status" value="NOT_ANNOTATED_CDS"/>
    <property type="molecule type" value="Genomic_DNA"/>
</dbReference>
<dbReference type="EMBL" id="CH471072">
    <property type="protein sequence ID" value="EAW86314.1"/>
    <property type="molecule type" value="Genomic_DNA"/>
</dbReference>
<dbReference type="EMBL" id="BC035745">
    <property type="protein sequence ID" value="AAH35745.1"/>
    <property type="molecule type" value="mRNA"/>
</dbReference>
<dbReference type="CCDS" id="CCDS7091.1">
    <molecule id="Q8IU85-1"/>
</dbReference>
<dbReference type="CCDS" id="CCDS7092.1">
    <molecule id="Q8IU85-2"/>
</dbReference>
<dbReference type="RefSeq" id="NP_065130.1">
    <molecule id="Q8IU85-2"/>
    <property type="nucleotide sequence ID" value="NM_020397.4"/>
</dbReference>
<dbReference type="RefSeq" id="NP_705718.1">
    <molecule id="Q8IU85-1"/>
    <property type="nucleotide sequence ID" value="NM_153498.4"/>
</dbReference>
<dbReference type="PDB" id="2JC6">
    <property type="method" value="X-ray"/>
    <property type="resolution" value="2.30 A"/>
    <property type="chains" value="A/C=1-333"/>
</dbReference>
<dbReference type="PDB" id="6QP5">
    <property type="method" value="X-ray"/>
    <property type="resolution" value="1.90 A"/>
    <property type="chains" value="A=10-329"/>
</dbReference>
<dbReference type="PDB" id="6T28">
    <property type="method" value="X-ray"/>
    <property type="resolution" value="1.55 A"/>
    <property type="chains" value="AAA=1-385"/>
</dbReference>
<dbReference type="PDB" id="6T29">
    <property type="method" value="X-ray"/>
    <property type="resolution" value="1.48 A"/>
    <property type="chains" value="AAA=1-385"/>
</dbReference>
<dbReference type="PDB" id="6T6F">
    <property type="method" value="X-ray"/>
    <property type="resolution" value="1.97 A"/>
    <property type="chains" value="A/B=10-329"/>
</dbReference>
<dbReference type="PDB" id="8BFM">
    <property type="method" value="X-ray"/>
    <property type="resolution" value="1.70 A"/>
    <property type="chains" value="A=1-385"/>
</dbReference>
<dbReference type="PDB" id="8BFS">
    <property type="method" value="X-ray"/>
    <property type="resolution" value="1.95 A"/>
    <property type="chains" value="A=1-385"/>
</dbReference>
<dbReference type="PDBsum" id="2JC6"/>
<dbReference type="PDBsum" id="6QP5"/>
<dbReference type="PDBsum" id="6T28"/>
<dbReference type="PDBsum" id="6T29"/>
<dbReference type="PDBsum" id="6T6F"/>
<dbReference type="PDBsum" id="8BFM"/>
<dbReference type="PDBsum" id="8BFS"/>
<dbReference type="SMR" id="Q8IU85"/>
<dbReference type="BioGRID" id="121382">
    <property type="interactions" value="53"/>
</dbReference>
<dbReference type="FunCoup" id="Q8IU85">
    <property type="interactions" value="2268"/>
</dbReference>
<dbReference type="IntAct" id="Q8IU85">
    <property type="interactions" value="34"/>
</dbReference>
<dbReference type="MINT" id="Q8IU85"/>
<dbReference type="STRING" id="9606.ENSP00000478874"/>
<dbReference type="BindingDB" id="Q8IU85"/>
<dbReference type="ChEMBL" id="CHEMBL5073"/>
<dbReference type="DrugBank" id="DB12010">
    <property type="generic name" value="Fostamatinib"/>
</dbReference>
<dbReference type="DrugBank" id="DB08454">
    <property type="generic name" value="N-(5-METHYL-1H-PYRAZOL-3-YL)-2-PHENYLQUINAZOLIN-4-AMINE"/>
</dbReference>
<dbReference type="DrugCentral" id="Q8IU85"/>
<dbReference type="GuidetoPHARMACOLOGY" id="1953"/>
<dbReference type="GlyGen" id="Q8IU85">
    <property type="glycosylation" value="1 site, 1 O-linked glycan (1 site)"/>
</dbReference>
<dbReference type="iPTMnet" id="Q8IU85"/>
<dbReference type="PhosphoSitePlus" id="Q8IU85"/>
<dbReference type="BioMuta" id="CAMK1D"/>
<dbReference type="DMDM" id="56404610"/>
<dbReference type="jPOST" id="Q8IU85"/>
<dbReference type="MassIVE" id="Q8IU85"/>
<dbReference type="PaxDb" id="9606-ENSP00000478874"/>
<dbReference type="PeptideAtlas" id="Q8IU85"/>
<dbReference type="ProteomicsDB" id="70522">
    <molecule id="Q8IU85-1"/>
</dbReference>
<dbReference type="ProteomicsDB" id="70523">
    <molecule id="Q8IU85-2"/>
</dbReference>
<dbReference type="Pumba" id="Q8IU85"/>
<dbReference type="Antibodypedia" id="1550">
    <property type="antibodies" value="435 antibodies from 36 providers"/>
</dbReference>
<dbReference type="DNASU" id="57118"/>
<dbReference type="Ensembl" id="ENST00000378845.5">
    <molecule id="Q8IU85-2"/>
    <property type="protein sequence ID" value="ENSP00000368122.1"/>
    <property type="gene ID" value="ENSG00000183049.14"/>
</dbReference>
<dbReference type="Ensembl" id="ENST00000619168.5">
    <molecule id="Q8IU85-1"/>
    <property type="protein sequence ID" value="ENSP00000478874.1"/>
    <property type="gene ID" value="ENSG00000183049.14"/>
</dbReference>
<dbReference type="GeneID" id="57118"/>
<dbReference type="KEGG" id="hsa:57118"/>
<dbReference type="MANE-Select" id="ENST00000619168.5">
    <property type="protein sequence ID" value="ENSP00000478874.1"/>
    <property type="RefSeq nucleotide sequence ID" value="NM_153498.4"/>
    <property type="RefSeq protein sequence ID" value="NP_705718.1"/>
</dbReference>
<dbReference type="UCSC" id="uc001iln.4">
    <molecule id="Q8IU85-1"/>
    <property type="organism name" value="human"/>
</dbReference>
<dbReference type="AGR" id="HGNC:19341"/>
<dbReference type="CTD" id="57118"/>
<dbReference type="DisGeNET" id="57118"/>
<dbReference type="GeneCards" id="CAMK1D"/>
<dbReference type="HGNC" id="HGNC:19341">
    <property type="gene designation" value="CAMK1D"/>
</dbReference>
<dbReference type="HPA" id="ENSG00000183049">
    <property type="expression patterns" value="Tissue enhanced (brain, retina)"/>
</dbReference>
<dbReference type="MIM" id="607957">
    <property type="type" value="gene"/>
</dbReference>
<dbReference type="neXtProt" id="NX_Q8IU85"/>
<dbReference type="OpenTargets" id="ENSG00000183049"/>
<dbReference type="PharmGKB" id="PA134992438"/>
<dbReference type="VEuPathDB" id="HostDB:ENSG00000183049"/>
<dbReference type="eggNOG" id="KOG0032">
    <property type="taxonomic scope" value="Eukaryota"/>
</dbReference>
<dbReference type="GeneTree" id="ENSGT00940000156776"/>
<dbReference type="InParanoid" id="Q8IU85"/>
<dbReference type="OMA" id="RPKVQPC"/>
<dbReference type="OrthoDB" id="40902at2759"/>
<dbReference type="PAN-GO" id="Q8IU85">
    <property type="GO annotations" value="5 GO annotations based on evolutionary models"/>
</dbReference>
<dbReference type="PhylomeDB" id="Q8IU85"/>
<dbReference type="TreeFam" id="TF314166"/>
<dbReference type="BRENDA" id="2.7.11.17">
    <property type="organism ID" value="2681"/>
</dbReference>
<dbReference type="PathwayCommons" id="Q8IU85"/>
<dbReference type="SignaLink" id="Q8IU85"/>
<dbReference type="SIGNOR" id="Q8IU85"/>
<dbReference type="BioGRID-ORCS" id="57118">
    <property type="hits" value="9 hits in 1188 CRISPR screens"/>
</dbReference>
<dbReference type="ChiTaRS" id="CAMK1D">
    <property type="organism name" value="human"/>
</dbReference>
<dbReference type="EvolutionaryTrace" id="Q8IU85"/>
<dbReference type="GenomeRNAi" id="57118"/>
<dbReference type="Pharos" id="Q8IU85">
    <property type="development level" value="Tchem"/>
</dbReference>
<dbReference type="PRO" id="PR:Q8IU85"/>
<dbReference type="Proteomes" id="UP000005640">
    <property type="component" value="Chromosome 10"/>
</dbReference>
<dbReference type="RNAct" id="Q8IU85">
    <property type="molecule type" value="protein"/>
</dbReference>
<dbReference type="Bgee" id="ENSG00000183049">
    <property type="expression patterns" value="Expressed in middle temporal gyrus and 183 other cell types or tissues"/>
</dbReference>
<dbReference type="ExpressionAtlas" id="Q8IU85">
    <property type="expression patterns" value="baseline and differential"/>
</dbReference>
<dbReference type="GO" id="GO:0005737">
    <property type="term" value="C:cytoplasm"/>
    <property type="evidence" value="ECO:0000314"/>
    <property type="project" value="UniProtKB"/>
</dbReference>
<dbReference type="GO" id="GO:0005634">
    <property type="term" value="C:nucleus"/>
    <property type="evidence" value="ECO:0000314"/>
    <property type="project" value="UniProtKB"/>
</dbReference>
<dbReference type="GO" id="GO:0005524">
    <property type="term" value="F:ATP binding"/>
    <property type="evidence" value="ECO:0007669"/>
    <property type="project" value="UniProtKB-KW"/>
</dbReference>
<dbReference type="GO" id="GO:0004683">
    <property type="term" value="F:calcium/calmodulin-dependent protein kinase activity"/>
    <property type="evidence" value="ECO:0000314"/>
    <property type="project" value="MGI"/>
</dbReference>
<dbReference type="GO" id="GO:0005516">
    <property type="term" value="F:calmodulin binding"/>
    <property type="evidence" value="ECO:0000318"/>
    <property type="project" value="GO_Central"/>
</dbReference>
<dbReference type="GO" id="GO:0106310">
    <property type="term" value="F:protein serine kinase activity"/>
    <property type="evidence" value="ECO:0007669"/>
    <property type="project" value="RHEA"/>
</dbReference>
<dbReference type="GO" id="GO:0006954">
    <property type="term" value="P:inflammatory response"/>
    <property type="evidence" value="ECO:0007669"/>
    <property type="project" value="UniProtKB-KW"/>
</dbReference>
<dbReference type="GO" id="GO:0043066">
    <property type="term" value="P:negative regulation of apoptotic process"/>
    <property type="evidence" value="ECO:0007669"/>
    <property type="project" value="Ensembl"/>
</dbReference>
<dbReference type="GO" id="GO:0007399">
    <property type="term" value="P:nervous system development"/>
    <property type="evidence" value="ECO:0007669"/>
    <property type="project" value="UniProtKB-KW"/>
</dbReference>
<dbReference type="GO" id="GO:0043065">
    <property type="term" value="P:positive regulation of apoptotic process"/>
    <property type="evidence" value="ECO:0007669"/>
    <property type="project" value="Ensembl"/>
</dbReference>
<dbReference type="GO" id="GO:0032793">
    <property type="term" value="P:positive regulation of CREB transcription factor activity"/>
    <property type="evidence" value="ECO:0000314"/>
    <property type="project" value="UniProtKB"/>
</dbReference>
<dbReference type="GO" id="GO:0010976">
    <property type="term" value="P:positive regulation of neuron projection development"/>
    <property type="evidence" value="ECO:0000250"/>
    <property type="project" value="UniProtKB"/>
</dbReference>
<dbReference type="GO" id="GO:0090023">
    <property type="term" value="P:positive regulation of neutrophil chemotaxis"/>
    <property type="evidence" value="ECO:0000250"/>
    <property type="project" value="UniProtKB"/>
</dbReference>
<dbReference type="GO" id="GO:0050766">
    <property type="term" value="P:positive regulation of phagocytosis"/>
    <property type="evidence" value="ECO:0000315"/>
    <property type="project" value="UniProtKB"/>
</dbReference>
<dbReference type="GO" id="GO:0060267">
    <property type="term" value="P:positive regulation of respiratory burst"/>
    <property type="evidence" value="ECO:0000315"/>
    <property type="project" value="UniProtKB"/>
</dbReference>
<dbReference type="GO" id="GO:0050773">
    <property type="term" value="P:regulation of dendrite development"/>
    <property type="evidence" value="ECO:0000315"/>
    <property type="project" value="UniProtKB"/>
</dbReference>
<dbReference type="GO" id="GO:0071622">
    <property type="term" value="P:regulation of granulocyte chemotaxis"/>
    <property type="evidence" value="ECO:0000315"/>
    <property type="project" value="UniProtKB"/>
</dbReference>
<dbReference type="GO" id="GO:0010975">
    <property type="term" value="P:regulation of neuron projection development"/>
    <property type="evidence" value="ECO:0000318"/>
    <property type="project" value="GO_Central"/>
</dbReference>
<dbReference type="GO" id="GO:0007165">
    <property type="term" value="P:signal transduction"/>
    <property type="evidence" value="ECO:0000318"/>
    <property type="project" value="GO_Central"/>
</dbReference>
<dbReference type="CDD" id="cd14168">
    <property type="entry name" value="STKc_CaMKI_delta"/>
    <property type="match status" value="1"/>
</dbReference>
<dbReference type="FunFam" id="1.10.510.10:FF:000026">
    <property type="entry name" value="Calcium/calmodulin-dependent protein kinase type 1"/>
    <property type="match status" value="1"/>
</dbReference>
<dbReference type="FunFam" id="3.30.200.20:FF:000203">
    <property type="entry name" value="Calcium/calmodulin-dependent protein kinase type 1"/>
    <property type="match status" value="1"/>
</dbReference>
<dbReference type="Gene3D" id="3.30.200.20">
    <property type="entry name" value="Phosphorylase Kinase, domain 1"/>
    <property type="match status" value="1"/>
</dbReference>
<dbReference type="Gene3D" id="1.10.510.10">
    <property type="entry name" value="Transferase(Phosphotransferase) domain 1"/>
    <property type="match status" value="1"/>
</dbReference>
<dbReference type="InterPro" id="IPR011009">
    <property type="entry name" value="Kinase-like_dom_sf"/>
</dbReference>
<dbReference type="InterPro" id="IPR000719">
    <property type="entry name" value="Prot_kinase_dom"/>
</dbReference>
<dbReference type="InterPro" id="IPR017441">
    <property type="entry name" value="Protein_kinase_ATP_BS"/>
</dbReference>
<dbReference type="InterPro" id="IPR008271">
    <property type="entry name" value="Ser/Thr_kinase_AS"/>
</dbReference>
<dbReference type="PANTHER" id="PTHR24347">
    <property type="entry name" value="SERINE/THREONINE-PROTEIN KINASE"/>
    <property type="match status" value="1"/>
</dbReference>
<dbReference type="Pfam" id="PF00069">
    <property type="entry name" value="Pkinase"/>
    <property type="match status" value="1"/>
</dbReference>
<dbReference type="SMART" id="SM00220">
    <property type="entry name" value="S_TKc"/>
    <property type="match status" value="1"/>
</dbReference>
<dbReference type="SUPFAM" id="SSF56112">
    <property type="entry name" value="Protein kinase-like (PK-like)"/>
    <property type="match status" value="1"/>
</dbReference>
<dbReference type="PROSITE" id="PS00107">
    <property type="entry name" value="PROTEIN_KINASE_ATP"/>
    <property type="match status" value="1"/>
</dbReference>
<dbReference type="PROSITE" id="PS50011">
    <property type="entry name" value="PROTEIN_KINASE_DOM"/>
    <property type="match status" value="1"/>
</dbReference>
<dbReference type="PROSITE" id="PS00108">
    <property type="entry name" value="PROTEIN_KINASE_ST"/>
    <property type="match status" value="1"/>
</dbReference>